<comment type="catalytic activity">
    <reaction evidence="1">
        <text>oxaloacetate + acetyl-CoA + H2O = citrate + CoA + H(+)</text>
        <dbReference type="Rhea" id="RHEA:16845"/>
        <dbReference type="ChEBI" id="CHEBI:15377"/>
        <dbReference type="ChEBI" id="CHEBI:15378"/>
        <dbReference type="ChEBI" id="CHEBI:16452"/>
        <dbReference type="ChEBI" id="CHEBI:16947"/>
        <dbReference type="ChEBI" id="CHEBI:57287"/>
        <dbReference type="ChEBI" id="CHEBI:57288"/>
        <dbReference type="EC" id="2.3.3.16"/>
    </reaction>
</comment>
<comment type="pathway">
    <text>Carbohydrate metabolism; tricarboxylic acid cycle; isocitrate from oxaloacetate: step 1/2.</text>
</comment>
<comment type="miscellaneous">
    <text>Citrate synthase is found in nearly all cells capable of oxidative metabolism.</text>
</comment>
<comment type="similarity">
    <text evidence="2">Belongs to the citrate synthase family.</text>
</comment>
<proteinExistence type="inferred from homology"/>
<gene>
    <name type="primary">gltA</name>
</gene>
<organism>
    <name type="scientific">Bartonella bacilliformis</name>
    <dbReference type="NCBI Taxonomy" id="774"/>
    <lineage>
        <taxon>Bacteria</taxon>
        <taxon>Pseudomonadati</taxon>
        <taxon>Pseudomonadota</taxon>
        <taxon>Alphaproteobacteria</taxon>
        <taxon>Hyphomicrobiales</taxon>
        <taxon>Bartonellaceae</taxon>
        <taxon>Bartonella</taxon>
    </lineage>
</organism>
<reference key="1">
    <citation type="journal article" date="1996" name="Int. J. Syst. Bacteriol.">
        <title>Comparison of partial citrate synthase gene (gltA) sequences for phylogenetic analysis of Bartonella species.</title>
        <authorList>
            <person name="Birtles R.J."/>
            <person name="Raoult D."/>
        </authorList>
    </citation>
    <scope>NUCLEOTIDE SEQUENCE [GENOMIC DNA] OF 1-303</scope>
    <source>
        <strain>LA6.3</strain>
    </source>
</reference>
<reference key="2">
    <citation type="submission" date="1995-05" db="EMBL/GenBank/DDBJ databases">
        <authorList>
            <person name="Jones D.C."/>
            <person name="Regnery R."/>
            <person name="Bowen M."/>
        </authorList>
    </citation>
    <scope>NUCLEOTIDE SEQUENCE [GENOMIC DNA] OF 210-321</scope>
    <source>
        <strain>ATCC 35686 / KC584 / NCTC 12139</strain>
    </source>
</reference>
<dbReference type="EC" id="2.3.3.16"/>
<dbReference type="EMBL" id="Z70021">
    <property type="protein sequence ID" value="CAA93843.1"/>
    <property type="molecule type" value="Genomic_DNA"/>
</dbReference>
<dbReference type="EMBL" id="U28076">
    <property type="protein sequence ID" value="AAA74976.1"/>
    <property type="molecule type" value="Genomic_DNA"/>
</dbReference>
<dbReference type="SMR" id="P51031"/>
<dbReference type="UniPathway" id="UPA00223">
    <property type="reaction ID" value="UER00717"/>
</dbReference>
<dbReference type="GO" id="GO:0005737">
    <property type="term" value="C:cytoplasm"/>
    <property type="evidence" value="ECO:0007669"/>
    <property type="project" value="InterPro"/>
</dbReference>
<dbReference type="GO" id="GO:0004108">
    <property type="term" value="F:citrate (Si)-synthase activity"/>
    <property type="evidence" value="ECO:0007669"/>
    <property type="project" value="InterPro"/>
</dbReference>
<dbReference type="GO" id="GO:0006099">
    <property type="term" value="P:tricarboxylic acid cycle"/>
    <property type="evidence" value="ECO:0007669"/>
    <property type="project" value="UniProtKB-UniPathway"/>
</dbReference>
<dbReference type="FunFam" id="1.10.230.10:FF:000002">
    <property type="entry name" value="Citrate synthase"/>
    <property type="match status" value="1"/>
</dbReference>
<dbReference type="Gene3D" id="1.10.580.10">
    <property type="entry name" value="Citrate Synthase, domain 1"/>
    <property type="match status" value="1"/>
</dbReference>
<dbReference type="Gene3D" id="1.10.230.10">
    <property type="entry name" value="Cytochrome P450-Terp, domain 2"/>
    <property type="match status" value="1"/>
</dbReference>
<dbReference type="InterPro" id="IPR016142">
    <property type="entry name" value="Citrate_synth-like_lrg_a-sub"/>
</dbReference>
<dbReference type="InterPro" id="IPR016143">
    <property type="entry name" value="Citrate_synth-like_sm_a-sub"/>
</dbReference>
<dbReference type="InterPro" id="IPR002020">
    <property type="entry name" value="Citrate_synthase"/>
</dbReference>
<dbReference type="InterPro" id="IPR019810">
    <property type="entry name" value="Citrate_synthase_AS"/>
</dbReference>
<dbReference type="InterPro" id="IPR024176">
    <property type="entry name" value="Citrate_synthase_bac-typ"/>
</dbReference>
<dbReference type="InterPro" id="IPR036969">
    <property type="entry name" value="Citrate_synthase_sf"/>
</dbReference>
<dbReference type="InterPro" id="IPR010953">
    <property type="entry name" value="Citrate_synthase_typ-I"/>
</dbReference>
<dbReference type="NCBIfam" id="TIGR01798">
    <property type="entry name" value="cit_synth_I"/>
    <property type="match status" value="1"/>
</dbReference>
<dbReference type="NCBIfam" id="NF004126">
    <property type="entry name" value="PRK05614.1"/>
    <property type="match status" value="1"/>
</dbReference>
<dbReference type="PANTHER" id="PTHR42871">
    <property type="entry name" value="CITRATE SYNTHASE"/>
    <property type="match status" value="1"/>
</dbReference>
<dbReference type="PANTHER" id="PTHR42871:SF1">
    <property type="entry name" value="CITRATE SYNTHASE"/>
    <property type="match status" value="1"/>
</dbReference>
<dbReference type="Pfam" id="PF00285">
    <property type="entry name" value="Citrate_synt"/>
    <property type="match status" value="1"/>
</dbReference>
<dbReference type="PIRSF" id="PIRSF001369">
    <property type="entry name" value="Citrate_synth"/>
    <property type="match status" value="1"/>
</dbReference>
<dbReference type="PRINTS" id="PR00143">
    <property type="entry name" value="CITRTSNTHASE"/>
</dbReference>
<dbReference type="SUPFAM" id="SSF48256">
    <property type="entry name" value="Citrate synthase"/>
    <property type="match status" value="1"/>
</dbReference>
<dbReference type="PROSITE" id="PS00480">
    <property type="entry name" value="CITRATE_SYNTHASE"/>
    <property type="match status" value="1"/>
</dbReference>
<keyword id="KW-0808">Transferase</keyword>
<keyword id="KW-0816">Tricarboxylic acid cycle</keyword>
<accession>P51031</accession>
<accession>Q59184</accession>
<name>CISY_BARBA</name>
<sequence length="321" mass="36372">YIDGDEGILLYHGYSIDQLAENGDFLETCYLLLYGELPNKQQKIDFDRCIMRHTMVHEQFARFFHGFRRDSHPMAVMVACLGAMSAFYHDSINITDPQQRMIASIRLISKVPTLAAMAYKYSIGQPFVYPRNDLNYATNFLHMCFSVPCEEHKISPVIARAMDRIFTLHADHEQNASTSTVRLAGSSGANPYACIAAGVACLWGPAHGGANEACLKMLQEIGSVKKIPEFIARAKDKNDPFRLMGFGHRVYKNYDPRAKIMQKTCHEVLQELNIQDDPLLDIAMELEHIALNDEYFINKKLYPNVDFYSGITLKALGFPTE</sequence>
<protein>
    <recommendedName>
        <fullName>Citrate synthase</fullName>
        <ecNumber>2.3.3.16</ecNumber>
    </recommendedName>
</protein>
<feature type="chain" id="PRO_0000169931" description="Citrate synthase">
    <location>
        <begin position="1" status="less than"/>
        <end position="321" status="greater than"/>
    </location>
</feature>
<feature type="active site" evidence="1">
    <location>
        <position position="248"/>
    </location>
</feature>
<feature type="active site" evidence="1">
    <location>
        <position position="306"/>
    </location>
</feature>
<feature type="sequence conflict" description="In Ref. 2; AAA74976." evidence="2" ref="2">
    <original>E</original>
    <variation>Q</variation>
    <location>
        <position position="229"/>
    </location>
</feature>
<feature type="sequence conflict" description="In Ref. 2; AAA74976." evidence="2" ref="2">
    <original>Q</original>
    <variation>K</variation>
    <location>
        <position position="270"/>
    </location>
</feature>
<feature type="sequence conflict" description="In Ref. 2; AAA74976." evidence="2" ref="2">
    <original>D</original>
    <variation>N</variation>
    <location>
        <position position="277"/>
    </location>
</feature>
<feature type="sequence conflict" description="In Ref. 2; AAA74976." evidence="2" ref="2">
    <original>L</original>
    <variation>F</variation>
    <location>
        <position position="280"/>
    </location>
</feature>
<feature type="non-terminal residue">
    <location>
        <position position="1"/>
    </location>
</feature>
<feature type="non-terminal residue">
    <location>
        <position position="321"/>
    </location>
</feature>
<evidence type="ECO:0000255" key="1">
    <source>
        <dbReference type="PROSITE-ProRule" id="PRU10117"/>
    </source>
</evidence>
<evidence type="ECO:0000305" key="2"/>